<organism>
    <name type="scientific">Proteus mirabilis (strain HI4320)</name>
    <dbReference type="NCBI Taxonomy" id="529507"/>
    <lineage>
        <taxon>Bacteria</taxon>
        <taxon>Pseudomonadati</taxon>
        <taxon>Pseudomonadota</taxon>
        <taxon>Gammaproteobacteria</taxon>
        <taxon>Enterobacterales</taxon>
        <taxon>Morganellaceae</taxon>
        <taxon>Proteus</taxon>
    </lineage>
</organism>
<sequence length="47" mass="5494">MKRTFQPSVLKRNRNHGFRARMATKNGRQVLARRRAKGRARLTVSSK</sequence>
<evidence type="ECO:0000255" key="1">
    <source>
        <dbReference type="HAMAP-Rule" id="MF_00391"/>
    </source>
</evidence>
<evidence type="ECO:0000256" key="2">
    <source>
        <dbReference type="SAM" id="MobiDB-lite"/>
    </source>
</evidence>
<evidence type="ECO:0000305" key="3"/>
<gene>
    <name evidence="1" type="primary">rpmH</name>
    <name type="ordered locus">PMI3131</name>
</gene>
<reference key="1">
    <citation type="journal article" date="2008" name="J. Bacteriol.">
        <title>Complete genome sequence of uropathogenic Proteus mirabilis, a master of both adherence and motility.</title>
        <authorList>
            <person name="Pearson M.M."/>
            <person name="Sebaihia M."/>
            <person name="Churcher C."/>
            <person name="Quail M.A."/>
            <person name="Seshasayee A.S."/>
            <person name="Luscombe N.M."/>
            <person name="Abdellah Z."/>
            <person name="Arrosmith C."/>
            <person name="Atkin B."/>
            <person name="Chillingworth T."/>
            <person name="Hauser H."/>
            <person name="Jagels K."/>
            <person name="Moule S."/>
            <person name="Mungall K."/>
            <person name="Norbertczak H."/>
            <person name="Rabbinowitsch E."/>
            <person name="Walker D."/>
            <person name="Whithead S."/>
            <person name="Thomson N.R."/>
            <person name="Rather P.N."/>
            <person name="Parkhill J."/>
            <person name="Mobley H.L.T."/>
        </authorList>
    </citation>
    <scope>NUCLEOTIDE SEQUENCE [LARGE SCALE GENOMIC DNA]</scope>
    <source>
        <strain>HI4320</strain>
    </source>
</reference>
<name>RL34_PROMH</name>
<accession>B4F0U4</accession>
<dbReference type="EMBL" id="AM942759">
    <property type="protein sequence ID" value="CAR46150.1"/>
    <property type="molecule type" value="Genomic_DNA"/>
</dbReference>
<dbReference type="RefSeq" id="WP_004246509.1">
    <property type="nucleotide sequence ID" value="NC_010554.1"/>
</dbReference>
<dbReference type="SMR" id="B4F0U4"/>
<dbReference type="EnsemblBacteria" id="CAR46150">
    <property type="protein sequence ID" value="CAR46150"/>
    <property type="gene ID" value="PMI3131"/>
</dbReference>
<dbReference type="GeneID" id="84584035"/>
<dbReference type="KEGG" id="pmr:PMI3131"/>
<dbReference type="eggNOG" id="COG0230">
    <property type="taxonomic scope" value="Bacteria"/>
</dbReference>
<dbReference type="HOGENOM" id="CLU_129938_2_0_6"/>
<dbReference type="Proteomes" id="UP000008319">
    <property type="component" value="Chromosome"/>
</dbReference>
<dbReference type="GO" id="GO:1990904">
    <property type="term" value="C:ribonucleoprotein complex"/>
    <property type="evidence" value="ECO:0007669"/>
    <property type="project" value="UniProtKB-KW"/>
</dbReference>
<dbReference type="GO" id="GO:0005840">
    <property type="term" value="C:ribosome"/>
    <property type="evidence" value="ECO:0007669"/>
    <property type="project" value="UniProtKB-KW"/>
</dbReference>
<dbReference type="GO" id="GO:0003735">
    <property type="term" value="F:structural constituent of ribosome"/>
    <property type="evidence" value="ECO:0007669"/>
    <property type="project" value="InterPro"/>
</dbReference>
<dbReference type="GO" id="GO:0006412">
    <property type="term" value="P:translation"/>
    <property type="evidence" value="ECO:0007669"/>
    <property type="project" value="UniProtKB-UniRule"/>
</dbReference>
<dbReference type="FunFam" id="1.10.287.3980:FF:000001">
    <property type="entry name" value="Mitochondrial ribosomal protein L34"/>
    <property type="match status" value="1"/>
</dbReference>
<dbReference type="Gene3D" id="1.10.287.3980">
    <property type="match status" value="1"/>
</dbReference>
<dbReference type="HAMAP" id="MF_00391">
    <property type="entry name" value="Ribosomal_bL34"/>
    <property type="match status" value="1"/>
</dbReference>
<dbReference type="InterPro" id="IPR000271">
    <property type="entry name" value="Ribosomal_bL34"/>
</dbReference>
<dbReference type="InterPro" id="IPR020939">
    <property type="entry name" value="Ribosomal_bL34_CS"/>
</dbReference>
<dbReference type="NCBIfam" id="TIGR01030">
    <property type="entry name" value="rpmH_bact"/>
    <property type="match status" value="1"/>
</dbReference>
<dbReference type="PANTHER" id="PTHR14503:SF4">
    <property type="entry name" value="LARGE RIBOSOMAL SUBUNIT PROTEIN BL34M"/>
    <property type="match status" value="1"/>
</dbReference>
<dbReference type="PANTHER" id="PTHR14503">
    <property type="entry name" value="MITOCHONDRIAL RIBOSOMAL PROTEIN 34 FAMILY MEMBER"/>
    <property type="match status" value="1"/>
</dbReference>
<dbReference type="Pfam" id="PF00468">
    <property type="entry name" value="Ribosomal_L34"/>
    <property type="match status" value="1"/>
</dbReference>
<dbReference type="PROSITE" id="PS00784">
    <property type="entry name" value="RIBOSOMAL_L34"/>
    <property type="match status" value="1"/>
</dbReference>
<comment type="similarity">
    <text evidence="1">Belongs to the bacterial ribosomal protein bL34 family.</text>
</comment>
<keyword id="KW-1185">Reference proteome</keyword>
<keyword id="KW-0687">Ribonucleoprotein</keyword>
<keyword id="KW-0689">Ribosomal protein</keyword>
<proteinExistence type="inferred from homology"/>
<protein>
    <recommendedName>
        <fullName evidence="1">Large ribosomal subunit protein bL34</fullName>
    </recommendedName>
    <alternativeName>
        <fullName evidence="3">50S ribosomal protein L34</fullName>
    </alternativeName>
</protein>
<feature type="chain" id="PRO_1000196090" description="Large ribosomal subunit protein bL34">
    <location>
        <begin position="1"/>
        <end position="47"/>
    </location>
</feature>
<feature type="region of interest" description="Disordered" evidence="2">
    <location>
        <begin position="28"/>
        <end position="47"/>
    </location>
</feature>
<feature type="compositionally biased region" description="Basic residues" evidence="2">
    <location>
        <begin position="31"/>
        <end position="40"/>
    </location>
</feature>